<gene>
    <name evidence="1" type="primary">lysS</name>
    <name type="ordered locus">SPD_0620</name>
</gene>
<dbReference type="EC" id="6.1.1.6" evidence="1"/>
<dbReference type="EMBL" id="CP000410">
    <property type="protein sequence ID" value="ABJ55386.1"/>
    <property type="molecule type" value="Genomic_DNA"/>
</dbReference>
<dbReference type="RefSeq" id="WP_000102460.1">
    <property type="nucleotide sequence ID" value="NZ_JAMLJR010000001.1"/>
</dbReference>
<dbReference type="SMR" id="Q04LI2"/>
<dbReference type="PaxDb" id="373153-SPD_0620"/>
<dbReference type="KEGG" id="spd:SPD_0620"/>
<dbReference type="eggNOG" id="COG1190">
    <property type="taxonomic scope" value="Bacteria"/>
</dbReference>
<dbReference type="HOGENOM" id="CLU_008255_6_0_9"/>
<dbReference type="BioCyc" id="SPNE373153:G1G6V-683-MONOMER"/>
<dbReference type="BRENDA" id="6.1.1.6">
    <property type="organism ID" value="1960"/>
</dbReference>
<dbReference type="Proteomes" id="UP000001452">
    <property type="component" value="Chromosome"/>
</dbReference>
<dbReference type="GO" id="GO:0005829">
    <property type="term" value="C:cytosol"/>
    <property type="evidence" value="ECO:0007669"/>
    <property type="project" value="TreeGrafter"/>
</dbReference>
<dbReference type="GO" id="GO:0005524">
    <property type="term" value="F:ATP binding"/>
    <property type="evidence" value="ECO:0007669"/>
    <property type="project" value="UniProtKB-UniRule"/>
</dbReference>
<dbReference type="GO" id="GO:0140096">
    <property type="term" value="F:catalytic activity, acting on a protein"/>
    <property type="evidence" value="ECO:0007669"/>
    <property type="project" value="UniProtKB-ARBA"/>
</dbReference>
<dbReference type="GO" id="GO:0004824">
    <property type="term" value="F:lysine-tRNA ligase activity"/>
    <property type="evidence" value="ECO:0007669"/>
    <property type="project" value="UniProtKB-UniRule"/>
</dbReference>
<dbReference type="GO" id="GO:0000287">
    <property type="term" value="F:magnesium ion binding"/>
    <property type="evidence" value="ECO:0007669"/>
    <property type="project" value="UniProtKB-UniRule"/>
</dbReference>
<dbReference type="GO" id="GO:0016740">
    <property type="term" value="F:transferase activity"/>
    <property type="evidence" value="ECO:0007669"/>
    <property type="project" value="UniProtKB-ARBA"/>
</dbReference>
<dbReference type="GO" id="GO:0000049">
    <property type="term" value="F:tRNA binding"/>
    <property type="evidence" value="ECO:0007669"/>
    <property type="project" value="TreeGrafter"/>
</dbReference>
<dbReference type="GO" id="GO:0006430">
    <property type="term" value="P:lysyl-tRNA aminoacylation"/>
    <property type="evidence" value="ECO:0007669"/>
    <property type="project" value="UniProtKB-UniRule"/>
</dbReference>
<dbReference type="CDD" id="cd00775">
    <property type="entry name" value="LysRS_core"/>
    <property type="match status" value="1"/>
</dbReference>
<dbReference type="CDD" id="cd04322">
    <property type="entry name" value="LysRS_N"/>
    <property type="match status" value="1"/>
</dbReference>
<dbReference type="FunFam" id="2.40.50.140:FF:000024">
    <property type="entry name" value="Lysine--tRNA ligase"/>
    <property type="match status" value="1"/>
</dbReference>
<dbReference type="FunFam" id="3.30.930.10:FF:000001">
    <property type="entry name" value="Lysine--tRNA ligase"/>
    <property type="match status" value="1"/>
</dbReference>
<dbReference type="Gene3D" id="3.30.930.10">
    <property type="entry name" value="Bira Bifunctional Protein, Domain 2"/>
    <property type="match status" value="1"/>
</dbReference>
<dbReference type="Gene3D" id="2.40.50.140">
    <property type="entry name" value="Nucleic acid-binding proteins"/>
    <property type="match status" value="1"/>
</dbReference>
<dbReference type="HAMAP" id="MF_00252">
    <property type="entry name" value="Lys_tRNA_synth_class2"/>
    <property type="match status" value="1"/>
</dbReference>
<dbReference type="InterPro" id="IPR004364">
    <property type="entry name" value="Aa-tRNA-synt_II"/>
</dbReference>
<dbReference type="InterPro" id="IPR006195">
    <property type="entry name" value="aa-tRNA-synth_II"/>
</dbReference>
<dbReference type="InterPro" id="IPR045864">
    <property type="entry name" value="aa-tRNA-synth_II/BPL/LPL"/>
</dbReference>
<dbReference type="InterPro" id="IPR002313">
    <property type="entry name" value="Lys-tRNA-ligase_II"/>
</dbReference>
<dbReference type="InterPro" id="IPR034762">
    <property type="entry name" value="Lys-tRNA-ligase_II_bac/euk"/>
</dbReference>
<dbReference type="InterPro" id="IPR044136">
    <property type="entry name" value="Lys-tRNA-ligase_II_N"/>
</dbReference>
<dbReference type="InterPro" id="IPR018149">
    <property type="entry name" value="Lys-tRNA-synth_II_C"/>
</dbReference>
<dbReference type="InterPro" id="IPR012340">
    <property type="entry name" value="NA-bd_OB-fold"/>
</dbReference>
<dbReference type="InterPro" id="IPR004365">
    <property type="entry name" value="NA-bd_OB_tRNA"/>
</dbReference>
<dbReference type="NCBIfam" id="TIGR00499">
    <property type="entry name" value="lysS_bact"/>
    <property type="match status" value="1"/>
</dbReference>
<dbReference type="NCBIfam" id="NF001756">
    <property type="entry name" value="PRK00484.1"/>
    <property type="match status" value="1"/>
</dbReference>
<dbReference type="PANTHER" id="PTHR42918:SF15">
    <property type="entry name" value="LYSINE--TRNA LIGASE, CHLOROPLASTIC_MITOCHONDRIAL"/>
    <property type="match status" value="1"/>
</dbReference>
<dbReference type="PANTHER" id="PTHR42918">
    <property type="entry name" value="LYSYL-TRNA SYNTHETASE"/>
    <property type="match status" value="1"/>
</dbReference>
<dbReference type="Pfam" id="PF00152">
    <property type="entry name" value="tRNA-synt_2"/>
    <property type="match status" value="1"/>
</dbReference>
<dbReference type="Pfam" id="PF01336">
    <property type="entry name" value="tRNA_anti-codon"/>
    <property type="match status" value="1"/>
</dbReference>
<dbReference type="PIRSF" id="PIRSF039101">
    <property type="entry name" value="LysRS2"/>
    <property type="match status" value="1"/>
</dbReference>
<dbReference type="PRINTS" id="PR00982">
    <property type="entry name" value="TRNASYNTHLYS"/>
</dbReference>
<dbReference type="SUPFAM" id="SSF55681">
    <property type="entry name" value="Class II aaRS and biotin synthetases"/>
    <property type="match status" value="1"/>
</dbReference>
<dbReference type="SUPFAM" id="SSF50249">
    <property type="entry name" value="Nucleic acid-binding proteins"/>
    <property type="match status" value="1"/>
</dbReference>
<dbReference type="PROSITE" id="PS50862">
    <property type="entry name" value="AA_TRNA_LIGASE_II"/>
    <property type="match status" value="1"/>
</dbReference>
<keyword id="KW-0030">Aminoacyl-tRNA synthetase</keyword>
<keyword id="KW-0067">ATP-binding</keyword>
<keyword id="KW-0963">Cytoplasm</keyword>
<keyword id="KW-0436">Ligase</keyword>
<keyword id="KW-0460">Magnesium</keyword>
<keyword id="KW-0479">Metal-binding</keyword>
<keyword id="KW-0547">Nucleotide-binding</keyword>
<keyword id="KW-0648">Protein biosynthesis</keyword>
<keyword id="KW-1185">Reference proteome</keyword>
<sequence>MSTEHMEELNDQQIVRREKMAALREQGIDPFGKRFERTANSQELKDKYANLDKEQLHDKNETATIAGRLVTKRGKGKVGFAHLQDREGQIQIYVRKDAVGEENYEIFKKADLGDFLGVEGEVMRTDMGELSIKATHITHLSKALRPLPEKFHGLTDVETIYRKRYLDLISNRESFERFVTRSKIISEIRRYLDQKGFLEVETPVLHNEAGGAAARPFITHHNAQNIDMVLRIATELHLKRLIVGGMERVYEIGRIFRNEGMDATHNPEFTSIEVYQAYADFQDIMDLTEGIIQHAAKSVKGDGPVNYQGTEIKINEPFKRVHMVDAIREITGVDFWQDMTLEEAKAIAAEKKVPVEKHYTEVGHIINAFFEEFVEETLIQPTFVYGHPVAVSPLAKKNPEDQRFTDRFELFIMTKEYGNAFTELNDPIDQLSRFEAQAKAKELGDDEATGIDYDYIEALEYGMPPTGGLGIGIDRLCMLLTDTTTIRDVLLFPTMK</sequence>
<accession>Q04LI2</accession>
<organism>
    <name type="scientific">Streptococcus pneumoniae serotype 2 (strain D39 / NCTC 7466)</name>
    <dbReference type="NCBI Taxonomy" id="373153"/>
    <lineage>
        <taxon>Bacteria</taxon>
        <taxon>Bacillati</taxon>
        <taxon>Bacillota</taxon>
        <taxon>Bacilli</taxon>
        <taxon>Lactobacillales</taxon>
        <taxon>Streptococcaceae</taxon>
        <taxon>Streptococcus</taxon>
    </lineage>
</organism>
<evidence type="ECO:0000255" key="1">
    <source>
        <dbReference type="HAMAP-Rule" id="MF_00252"/>
    </source>
</evidence>
<proteinExistence type="inferred from homology"/>
<name>SYK_STRP2</name>
<reference key="1">
    <citation type="journal article" date="2007" name="J. Bacteriol.">
        <title>Genome sequence of Avery's virulent serotype 2 strain D39 of Streptococcus pneumoniae and comparison with that of unencapsulated laboratory strain R6.</title>
        <authorList>
            <person name="Lanie J.A."/>
            <person name="Ng W.-L."/>
            <person name="Kazmierczak K.M."/>
            <person name="Andrzejewski T.M."/>
            <person name="Davidsen T.M."/>
            <person name="Wayne K.J."/>
            <person name="Tettelin H."/>
            <person name="Glass J.I."/>
            <person name="Winkler M.E."/>
        </authorList>
    </citation>
    <scope>NUCLEOTIDE SEQUENCE [LARGE SCALE GENOMIC DNA]</scope>
    <source>
        <strain>D39 / NCTC 7466</strain>
    </source>
</reference>
<comment type="catalytic activity">
    <reaction evidence="1">
        <text>tRNA(Lys) + L-lysine + ATP = L-lysyl-tRNA(Lys) + AMP + diphosphate</text>
        <dbReference type="Rhea" id="RHEA:20792"/>
        <dbReference type="Rhea" id="RHEA-COMP:9696"/>
        <dbReference type="Rhea" id="RHEA-COMP:9697"/>
        <dbReference type="ChEBI" id="CHEBI:30616"/>
        <dbReference type="ChEBI" id="CHEBI:32551"/>
        <dbReference type="ChEBI" id="CHEBI:33019"/>
        <dbReference type="ChEBI" id="CHEBI:78442"/>
        <dbReference type="ChEBI" id="CHEBI:78529"/>
        <dbReference type="ChEBI" id="CHEBI:456215"/>
        <dbReference type="EC" id="6.1.1.6"/>
    </reaction>
</comment>
<comment type="cofactor">
    <cofactor evidence="1">
        <name>Mg(2+)</name>
        <dbReference type="ChEBI" id="CHEBI:18420"/>
    </cofactor>
    <text evidence="1">Binds 3 Mg(2+) ions per subunit.</text>
</comment>
<comment type="subunit">
    <text evidence="1">Homodimer.</text>
</comment>
<comment type="subcellular location">
    <subcellularLocation>
        <location evidence="1">Cytoplasm</location>
    </subcellularLocation>
</comment>
<comment type="similarity">
    <text evidence="1">Belongs to the class-II aminoacyl-tRNA synthetase family.</text>
</comment>
<protein>
    <recommendedName>
        <fullName evidence="1">Lysine--tRNA ligase</fullName>
        <ecNumber evidence="1">6.1.1.6</ecNumber>
    </recommendedName>
    <alternativeName>
        <fullName evidence="1">Lysyl-tRNA synthetase</fullName>
        <shortName evidence="1">LysRS</shortName>
    </alternativeName>
</protein>
<feature type="chain" id="PRO_1000012946" description="Lysine--tRNA ligase">
    <location>
        <begin position="1"/>
        <end position="496"/>
    </location>
</feature>
<feature type="binding site" evidence="1">
    <location>
        <position position="409"/>
    </location>
    <ligand>
        <name>Mg(2+)</name>
        <dbReference type="ChEBI" id="CHEBI:18420"/>
        <label>1</label>
    </ligand>
</feature>
<feature type="binding site" evidence="1">
    <location>
        <position position="416"/>
    </location>
    <ligand>
        <name>Mg(2+)</name>
        <dbReference type="ChEBI" id="CHEBI:18420"/>
        <label>1</label>
    </ligand>
</feature>
<feature type="binding site" evidence="1">
    <location>
        <position position="416"/>
    </location>
    <ligand>
        <name>Mg(2+)</name>
        <dbReference type="ChEBI" id="CHEBI:18420"/>
        <label>2</label>
    </ligand>
</feature>